<sequence length="652" mass="74385">MNPNNRSEHDTIKVTPNSELQTNHNQYPLADNPNSTLEELNYKEFLRMTEDSSTEVLDNSTVKDAVGTGISVVGQILGVVGVPFAGALTSFYQSFLNTIWPSDADPWKAFMAQVEVLIDKKIEEYAKSKALAELQGLQNNFEDYVNALNSWKKTPLSLRSKRSQDRIRELFSQAESHFRNSMPSFAVSKFEVLFLPTYAQAANTHLLLLKDAQVFGEEWGYSSEDVAEFYHRQLKLTQQYTDHCVNWYNVGLNGLRGSTYDAWVKFNRFRREMTLTVLDLIVLFPFYDIRLYSKGVKTELTRDIFTDPIFSLNTLQEYGPTFLSIENSIRKPHLFDYLQGIEFHTRLQPGYFGKDSFNYWSGNYVETRPSIGSSKTITSPFYGDKSTEPVQKLSFDGQKVYRTIANTDVAAWPNGKVYLGVTKVDFSQYDDQKNETSTQTYDSKRNNGHVSAQDSIDQLPPETTDEPLEKAYSHQLNYAECFLMQDRRGTIPFFTWTHRSVDFFNTIDAEKITQLPVVKAYALSSGASIIEGPGFTGGNLLFLKESSNSIAKFKVTLNSAALLQRYRVRIRYASTTNLRLFVQNSNNDFLVIYINKTMNKDDDLTYQTFDLATTNSNMGFSGDKNELIIGAESFVSNEKIYIDKIEFIPVQL</sequence>
<protein>
    <recommendedName>
        <fullName>Pesticidal crystal protein Cry3Bb</fullName>
    </recommendedName>
    <alternativeName>
        <fullName>74 kDa crystal protein</fullName>
    </alternativeName>
    <alternativeName>
        <fullName>Crystaline entomocidal protoxin</fullName>
    </alternativeName>
    <alternativeName>
        <fullName>Insecticidal delta-endotoxin CryIIIB(b)</fullName>
    </alternativeName>
</protein>
<keyword id="KW-0002">3D-structure</keyword>
<keyword id="KW-0749">Sporulation</keyword>
<keyword id="KW-0800">Toxin</keyword>
<keyword id="KW-0843">Virulence</keyword>
<evidence type="ECO:0000256" key="1">
    <source>
        <dbReference type="SAM" id="MobiDB-lite"/>
    </source>
</evidence>
<evidence type="ECO:0000305" key="2"/>
<evidence type="ECO:0007829" key="3">
    <source>
        <dbReference type="PDB" id="1JI6"/>
    </source>
</evidence>
<accession>Q06117</accession>
<accession>Q45717</accession>
<gene>
    <name type="primary">cry3Bb</name>
    <name type="synonym">cryIIIB(b)</name>
    <name type="synonym">cryIIIb2</name>
</gene>
<reference key="1">
    <citation type="journal article" date="1992" name="Appl. Environ. Microbiol.">
        <title>Characterization of two genes encoding Bacillus thuringiensis insecticidal crystal proteins toxic to Coleoptera species.</title>
        <authorList>
            <person name="Donovan W.P."/>
            <person name="Rupar M.J."/>
            <person name="Slaney A.C."/>
            <person name="Malvar T."/>
            <person name="Gawron-Burke M.C."/>
            <person name="Johnson T.B."/>
        </authorList>
    </citation>
    <scope>NUCLEOTIDE SEQUENCE [GENOMIC DNA]</scope>
    <source>
        <strain>EG4961</strain>
    </source>
</reference>
<reference key="2">
    <citation type="patent" date="1995-01-03" number="US5378625">
        <title>Bacillus thuringiensis cryIIIC, (b) protein toxic to coleopteran insects.</title>
        <authorList>
            <person name="Donovan W.P."/>
            <person name="Rupar M.J."/>
            <person name="Slaney A.C."/>
        </authorList>
    </citation>
    <scope>NUCLEOTIDE SEQUENCE [GENOMIC DNA]</scope>
    <source>
        <strain>NRRL B-18655 / EG5144</strain>
    </source>
</reference>
<name>CR3BB_BACTU</name>
<dbReference type="EMBL" id="M89794">
    <property type="protein sequence ID" value="AAA22334.1"/>
    <property type="molecule type" value="Genomic_DNA"/>
</dbReference>
<dbReference type="EMBL" id="U31633">
    <property type="protein sequence ID" value="AAA74198.1"/>
    <property type="molecule type" value="Genomic_DNA"/>
</dbReference>
<dbReference type="PIR" id="I39811">
    <property type="entry name" value="I39811"/>
</dbReference>
<dbReference type="PDB" id="1JI6">
    <property type="method" value="X-ray"/>
    <property type="resolution" value="2.40 A"/>
    <property type="chains" value="A=64-652"/>
</dbReference>
<dbReference type="PDBsum" id="1JI6"/>
<dbReference type="SMR" id="Q06117"/>
<dbReference type="EvolutionaryTrace" id="Q06117"/>
<dbReference type="GO" id="GO:0005102">
    <property type="term" value="F:signaling receptor binding"/>
    <property type="evidence" value="ECO:0007669"/>
    <property type="project" value="InterPro"/>
</dbReference>
<dbReference type="GO" id="GO:0090729">
    <property type="term" value="F:toxin activity"/>
    <property type="evidence" value="ECO:0007669"/>
    <property type="project" value="UniProtKB-KW"/>
</dbReference>
<dbReference type="GO" id="GO:0030435">
    <property type="term" value="P:sporulation resulting in formation of a cellular spore"/>
    <property type="evidence" value="ECO:0007669"/>
    <property type="project" value="UniProtKB-KW"/>
</dbReference>
<dbReference type="GO" id="GO:0001907">
    <property type="term" value="P:symbiont-mediated killing of host cell"/>
    <property type="evidence" value="ECO:0007669"/>
    <property type="project" value="InterPro"/>
</dbReference>
<dbReference type="CDD" id="cd04085">
    <property type="entry name" value="delta_endotoxin_C"/>
    <property type="match status" value="1"/>
</dbReference>
<dbReference type="Gene3D" id="2.60.120.260">
    <property type="entry name" value="Galactose-binding domain-like"/>
    <property type="match status" value="1"/>
</dbReference>
<dbReference type="Gene3D" id="2.100.10.10">
    <property type="entry name" value="Pesticidal crystal protein, central domain"/>
    <property type="match status" value="1"/>
</dbReference>
<dbReference type="Gene3D" id="1.20.190.10">
    <property type="entry name" value="Pesticidal crystal protein, N-terminal domain"/>
    <property type="match status" value="1"/>
</dbReference>
<dbReference type="InterPro" id="IPR008979">
    <property type="entry name" value="Galactose-bd-like_sf"/>
</dbReference>
<dbReference type="InterPro" id="IPR038979">
    <property type="entry name" value="Pest_crys"/>
</dbReference>
<dbReference type="InterPro" id="IPR005638">
    <property type="entry name" value="Pest_crys_dom-III"/>
</dbReference>
<dbReference type="InterPro" id="IPR005639">
    <property type="entry name" value="Pest_crys_dom_I"/>
</dbReference>
<dbReference type="InterPro" id="IPR036716">
    <property type="entry name" value="Pest_crys_N_sf"/>
</dbReference>
<dbReference type="InterPro" id="IPR036399">
    <property type="entry name" value="Pest_cryst_cen_dom_sf"/>
</dbReference>
<dbReference type="InterPro" id="IPR001178">
    <property type="entry name" value="Pest_cryst_dom_II"/>
</dbReference>
<dbReference type="PANTHER" id="PTHR37003">
    <property type="entry name" value="ENDOTOXIN_N DOMAIN-CONTAINING PROTEIN-RELATED"/>
    <property type="match status" value="1"/>
</dbReference>
<dbReference type="PANTHER" id="PTHR37003:SF2">
    <property type="entry name" value="PESTICIDAL CRYSTAL PROTEIN N-TERMINAL DOMAIN-CONTAINING PROTEIN"/>
    <property type="match status" value="1"/>
</dbReference>
<dbReference type="Pfam" id="PF03944">
    <property type="entry name" value="Endotoxin_C"/>
    <property type="match status" value="1"/>
</dbReference>
<dbReference type="Pfam" id="PF00555">
    <property type="entry name" value="Endotoxin_M"/>
    <property type="match status" value="1"/>
</dbReference>
<dbReference type="Pfam" id="PF03945">
    <property type="entry name" value="Endotoxin_N"/>
    <property type="match status" value="1"/>
</dbReference>
<dbReference type="SUPFAM" id="SSF51096">
    <property type="entry name" value="delta-Endotoxin (insectocide), middle domain"/>
    <property type="match status" value="1"/>
</dbReference>
<dbReference type="SUPFAM" id="SSF56849">
    <property type="entry name" value="delta-Endotoxin (insectocide), N-terminal domain"/>
    <property type="match status" value="1"/>
</dbReference>
<dbReference type="SUPFAM" id="SSF49785">
    <property type="entry name" value="Galactose-binding domain-like"/>
    <property type="match status" value="1"/>
</dbReference>
<proteinExistence type="evidence at protein level"/>
<organism>
    <name type="scientific">Bacillus thuringiensis</name>
    <dbReference type="NCBI Taxonomy" id="1428"/>
    <lineage>
        <taxon>Bacteria</taxon>
        <taxon>Bacillati</taxon>
        <taxon>Bacillota</taxon>
        <taxon>Bacilli</taxon>
        <taxon>Bacillales</taxon>
        <taxon>Bacillaceae</taxon>
        <taxon>Bacillus</taxon>
        <taxon>Bacillus cereus group</taxon>
    </lineage>
</organism>
<feature type="chain" id="PRO_0000174061" description="Pesticidal crystal protein Cry3Bb">
    <location>
        <begin position="1"/>
        <end position="652"/>
    </location>
</feature>
<feature type="region of interest" description="Disordered" evidence="1">
    <location>
        <begin position="1"/>
        <end position="33"/>
    </location>
</feature>
<feature type="region of interest" description="Disordered" evidence="1">
    <location>
        <begin position="433"/>
        <end position="465"/>
    </location>
</feature>
<feature type="compositionally biased region" description="Basic and acidic residues" evidence="1">
    <location>
        <begin position="1"/>
        <end position="12"/>
    </location>
</feature>
<feature type="compositionally biased region" description="Polar residues" evidence="1">
    <location>
        <begin position="14"/>
        <end position="33"/>
    </location>
</feature>
<feature type="sequence variant" description="In strain: EG5144.">
    <original>Q</original>
    <variation>P</variation>
    <location>
        <position position="21"/>
    </location>
</feature>
<feature type="sequence variant" description="In strain: EG5144.">
    <original>N</original>
    <variation>D</variation>
    <location>
        <position position="97"/>
    </location>
</feature>
<feature type="sequence variant" description="In strain: EG5144.">
    <original>I</original>
    <variation>V</variation>
    <location>
        <position position="289"/>
    </location>
</feature>
<feature type="sequence variant" description="In strain: EG5144.">
    <original>F</original>
    <variation>S</variation>
    <location>
        <position position="352"/>
    </location>
</feature>
<feature type="sequence variant" description="In strain: EG5144.">
    <original>VYL</original>
    <variation>IYF</variation>
    <location>
        <begin position="417"/>
        <end position="419"/>
    </location>
</feature>
<feature type="sequence variant" description="In strain: EG5144.">
    <original>S</original>
    <variation>G</variation>
    <location>
        <position position="451"/>
    </location>
</feature>
<feature type="sequence variant" description="In strain: EG5144.">
    <original>L</original>
    <variation>I</variation>
    <location>
        <position position="590"/>
    </location>
</feature>
<feature type="sequence variant" description="In strain: EG5144.">
    <original>K</original>
    <variation>I</variation>
    <location>
        <position position="600"/>
    </location>
</feature>
<feature type="sequence variant" description="In strain: EG5144.">
    <original>K</original>
    <variation>T</variation>
    <location>
        <position position="624"/>
    </location>
</feature>
<feature type="helix" evidence="3">
    <location>
        <begin position="65"/>
        <end position="79"/>
    </location>
</feature>
<feature type="helix" evidence="3">
    <location>
        <begin position="83"/>
        <end position="86"/>
    </location>
</feature>
<feature type="helix" evidence="3">
    <location>
        <begin position="91"/>
        <end position="98"/>
    </location>
</feature>
<feature type="helix" evidence="3">
    <location>
        <begin position="105"/>
        <end position="113"/>
    </location>
</feature>
<feature type="helix" evidence="3">
    <location>
        <begin position="115"/>
        <end position="118"/>
    </location>
</feature>
<feature type="helix" evidence="3">
    <location>
        <begin position="124"/>
        <end position="153"/>
    </location>
</feature>
<feature type="helix" evidence="3">
    <location>
        <begin position="156"/>
        <end position="158"/>
    </location>
</feature>
<feature type="helix" evidence="3">
    <location>
        <begin position="161"/>
        <end position="181"/>
    </location>
</feature>
<feature type="helix" evidence="3">
    <location>
        <begin position="182"/>
        <end position="185"/>
    </location>
</feature>
<feature type="helix" evidence="3">
    <location>
        <begin position="191"/>
        <end position="209"/>
    </location>
</feature>
<feature type="helix" evidence="3">
    <location>
        <begin position="211"/>
        <end position="215"/>
    </location>
</feature>
<feature type="turn" evidence="3">
    <location>
        <begin position="216"/>
        <end position="220"/>
    </location>
</feature>
<feature type="helix" evidence="3">
    <location>
        <begin position="223"/>
        <end position="254"/>
    </location>
</feature>
<feature type="helix" evidence="3">
    <location>
        <begin position="260"/>
        <end position="276"/>
    </location>
</feature>
<feature type="helix" evidence="3">
    <location>
        <begin position="278"/>
        <end position="281"/>
    </location>
</feature>
<feature type="helix" evidence="3">
    <location>
        <begin position="284"/>
        <end position="287"/>
    </location>
</feature>
<feature type="turn" evidence="3">
    <location>
        <begin position="289"/>
        <end position="294"/>
    </location>
</feature>
<feature type="turn" evidence="3">
    <location>
        <begin position="313"/>
        <end position="315"/>
    </location>
</feature>
<feature type="helix" evidence="3">
    <location>
        <begin position="316"/>
        <end position="318"/>
    </location>
</feature>
<feature type="helix" evidence="3">
    <location>
        <begin position="322"/>
        <end position="326"/>
    </location>
</feature>
<feature type="strand" evidence="3">
    <location>
        <begin position="336"/>
        <end position="348"/>
    </location>
</feature>
<feature type="strand" evidence="3">
    <location>
        <begin position="357"/>
        <end position="370"/>
    </location>
</feature>
<feature type="strand" evidence="3">
    <location>
        <begin position="391"/>
        <end position="394"/>
    </location>
</feature>
<feature type="strand" evidence="3">
    <location>
        <begin position="399"/>
        <end position="411"/>
    </location>
</feature>
<feature type="strand" evidence="3">
    <location>
        <begin position="417"/>
        <end position="430"/>
    </location>
</feature>
<feature type="turn" evidence="3">
    <location>
        <begin position="431"/>
        <end position="434"/>
    </location>
</feature>
<feature type="strand" evidence="3">
    <location>
        <begin position="435"/>
        <end position="442"/>
    </location>
</feature>
<feature type="strand" evidence="3">
    <location>
        <begin position="450"/>
        <end position="454"/>
    </location>
</feature>
<feature type="helix" evidence="3">
    <location>
        <begin position="455"/>
        <end position="458"/>
    </location>
</feature>
<feature type="strand" evidence="3">
    <location>
        <begin position="464"/>
        <end position="466"/>
    </location>
</feature>
<feature type="helix" evidence="3">
    <location>
        <begin position="468"/>
        <end position="471"/>
    </location>
</feature>
<feature type="strand" evidence="3">
    <location>
        <begin position="474"/>
        <end position="483"/>
    </location>
</feature>
<feature type="strand" evidence="3">
    <location>
        <begin position="490"/>
        <end position="498"/>
    </location>
</feature>
<feature type="strand" evidence="3">
    <location>
        <begin position="509"/>
        <end position="516"/>
    </location>
</feature>
<feature type="helix" evidence="3">
    <location>
        <begin position="517"/>
        <end position="519"/>
    </location>
</feature>
<feature type="strand" evidence="3">
    <location>
        <begin position="521"/>
        <end position="523"/>
    </location>
</feature>
<feature type="strand" evidence="3">
    <location>
        <begin position="527"/>
        <end position="530"/>
    </location>
</feature>
<feature type="strand" evidence="3">
    <location>
        <begin position="534"/>
        <end position="538"/>
    </location>
</feature>
<feature type="strand" evidence="3">
    <location>
        <begin position="540"/>
        <end position="545"/>
    </location>
</feature>
<feature type="strand" evidence="3">
    <location>
        <begin position="550"/>
        <end position="556"/>
    </location>
</feature>
<feature type="helix" evidence="3">
    <location>
        <begin position="559"/>
        <end position="562"/>
    </location>
</feature>
<feature type="strand" evidence="3">
    <location>
        <begin position="566"/>
        <end position="576"/>
    </location>
</feature>
<feature type="strand" evidence="3">
    <location>
        <begin position="578"/>
        <end position="584"/>
    </location>
</feature>
<feature type="strand" evidence="3">
    <location>
        <begin position="589"/>
        <end position="594"/>
    </location>
</feature>
<feature type="helix" evidence="3">
    <location>
        <begin position="606"/>
        <end position="608"/>
    </location>
</feature>
<feature type="strand" evidence="3">
    <location>
        <begin position="610"/>
        <end position="613"/>
    </location>
</feature>
<feature type="strand" evidence="3">
    <location>
        <begin position="625"/>
        <end position="631"/>
    </location>
</feature>
<feature type="strand" evidence="3">
    <location>
        <begin position="640"/>
        <end position="649"/>
    </location>
</feature>
<comment type="function">
    <text>Promotes colloidosmotic lysis by binding to the midgut epithelial cells of Coleoptera. Has moderate level of toxicity to southern corn rootworm.</text>
</comment>
<comment type="subunit">
    <text>Monomer.</text>
</comment>
<comment type="developmental stage">
    <text>The crystal protein is produced during sporulation and is accumulated both as an inclusion and as part of the spore coat.</text>
</comment>
<comment type="miscellaneous">
    <text>Toxic segment of the protein is located in the N-terminus.</text>
</comment>
<comment type="similarity">
    <text evidence="2">Belongs to the delta endotoxin family.</text>
</comment>